<feature type="chain" id="PRO_0000108675" description="Ribosomal RNA small subunit methyltransferase H">
    <location>
        <begin position="1"/>
        <end position="304"/>
    </location>
</feature>
<feature type="binding site" evidence="1">
    <location>
        <begin position="36"/>
        <end position="38"/>
    </location>
    <ligand>
        <name>S-adenosyl-L-methionine</name>
        <dbReference type="ChEBI" id="CHEBI:59789"/>
    </ligand>
</feature>
<feature type="binding site" evidence="1">
    <location>
        <position position="55"/>
    </location>
    <ligand>
        <name>S-adenosyl-L-methionine</name>
        <dbReference type="ChEBI" id="CHEBI:59789"/>
    </ligand>
</feature>
<feature type="binding site" evidence="1">
    <location>
        <position position="81"/>
    </location>
    <ligand>
        <name>S-adenosyl-L-methionine</name>
        <dbReference type="ChEBI" id="CHEBI:59789"/>
    </ligand>
</feature>
<feature type="binding site" evidence="1">
    <location>
        <position position="102"/>
    </location>
    <ligand>
        <name>S-adenosyl-L-methionine</name>
        <dbReference type="ChEBI" id="CHEBI:59789"/>
    </ligand>
</feature>
<feature type="binding site" evidence="1">
    <location>
        <position position="109"/>
    </location>
    <ligand>
        <name>S-adenosyl-L-methionine</name>
        <dbReference type="ChEBI" id="CHEBI:59789"/>
    </ligand>
</feature>
<sequence>MNKTHFNHISVLKQEAIDFLKIKPEGIYVDATLGQCGHTIEIANLLQQGFLYSFDQDVEACTNAKKILPPHLPIEIIHSNFSHLKTQLAQRNVFQLDGILFDLGLSSCQIDNPQRGFSYLHNTPLDMRMNVNQTITAQYILNNYSFAQLKNIFKVYGEVKNAALVASEIIKQRPLCTSYDLVAITDRFCNRQKGHSAKKIFQALRIEVNQELESLKQALEQSLDLLKPNAMIVVISFHSLEDRIVKHFFKKNSTFVLPKKMPITIMPQTPLSIITKKAFLPSEEEMQNNSRSISAKLRVAVKNG</sequence>
<protein>
    <recommendedName>
        <fullName evidence="1">Ribosomal RNA small subunit methyltransferase H</fullName>
        <ecNumber evidence="1">2.1.1.199</ecNumber>
    </recommendedName>
    <alternativeName>
        <fullName evidence="1">16S rRNA m(4)C1402 methyltransferase</fullName>
    </alternativeName>
    <alternativeName>
        <fullName evidence="1">rRNA (cytosine-N(4)-)-methyltransferase RsmH</fullName>
    </alternativeName>
</protein>
<accession>P60397</accession>
<dbReference type="EC" id="2.1.1.199" evidence="1"/>
<dbReference type="EMBL" id="AP006628">
    <property type="protein sequence ID" value="BAD04820.1"/>
    <property type="status" value="ALT_INIT"/>
    <property type="molecule type" value="Genomic_DNA"/>
</dbReference>
<dbReference type="SMR" id="P60397"/>
<dbReference type="STRING" id="262768.PAM_735"/>
<dbReference type="KEGG" id="poy:PAM_735"/>
<dbReference type="eggNOG" id="COG0275">
    <property type="taxonomic scope" value="Bacteria"/>
</dbReference>
<dbReference type="HOGENOM" id="CLU_038422_2_0_14"/>
<dbReference type="BioCyc" id="OYEL262768:G1G26-890-MONOMER"/>
<dbReference type="Proteomes" id="UP000002523">
    <property type="component" value="Chromosome"/>
</dbReference>
<dbReference type="GO" id="GO:0005737">
    <property type="term" value="C:cytoplasm"/>
    <property type="evidence" value="ECO:0007669"/>
    <property type="project" value="UniProtKB-SubCell"/>
</dbReference>
<dbReference type="GO" id="GO:0071424">
    <property type="term" value="F:rRNA (cytosine-N4-)-methyltransferase activity"/>
    <property type="evidence" value="ECO:0007669"/>
    <property type="project" value="UniProtKB-UniRule"/>
</dbReference>
<dbReference type="GO" id="GO:0070475">
    <property type="term" value="P:rRNA base methylation"/>
    <property type="evidence" value="ECO:0007669"/>
    <property type="project" value="UniProtKB-UniRule"/>
</dbReference>
<dbReference type="Gene3D" id="1.10.150.170">
    <property type="entry name" value="Putative methyltransferase TM0872, insert domain"/>
    <property type="match status" value="1"/>
</dbReference>
<dbReference type="Gene3D" id="3.40.50.150">
    <property type="entry name" value="Vaccinia Virus protein VP39"/>
    <property type="match status" value="1"/>
</dbReference>
<dbReference type="HAMAP" id="MF_01007">
    <property type="entry name" value="16SrRNA_methyltr_H"/>
    <property type="match status" value="1"/>
</dbReference>
<dbReference type="InterPro" id="IPR002903">
    <property type="entry name" value="RsmH"/>
</dbReference>
<dbReference type="InterPro" id="IPR023397">
    <property type="entry name" value="SAM-dep_MeTrfase_MraW_recog"/>
</dbReference>
<dbReference type="InterPro" id="IPR029063">
    <property type="entry name" value="SAM-dependent_MTases_sf"/>
</dbReference>
<dbReference type="NCBIfam" id="TIGR00006">
    <property type="entry name" value="16S rRNA (cytosine(1402)-N(4))-methyltransferase RsmH"/>
    <property type="match status" value="1"/>
</dbReference>
<dbReference type="PANTHER" id="PTHR11265:SF0">
    <property type="entry name" value="12S RRNA N4-METHYLCYTIDINE METHYLTRANSFERASE"/>
    <property type="match status" value="1"/>
</dbReference>
<dbReference type="PANTHER" id="PTHR11265">
    <property type="entry name" value="S-ADENOSYL-METHYLTRANSFERASE MRAW"/>
    <property type="match status" value="1"/>
</dbReference>
<dbReference type="Pfam" id="PF01795">
    <property type="entry name" value="Methyltransf_5"/>
    <property type="match status" value="1"/>
</dbReference>
<dbReference type="PIRSF" id="PIRSF004486">
    <property type="entry name" value="MraW"/>
    <property type="match status" value="1"/>
</dbReference>
<dbReference type="SUPFAM" id="SSF81799">
    <property type="entry name" value="Putative methyltransferase TM0872, insert domain"/>
    <property type="match status" value="1"/>
</dbReference>
<dbReference type="SUPFAM" id="SSF53335">
    <property type="entry name" value="S-adenosyl-L-methionine-dependent methyltransferases"/>
    <property type="match status" value="1"/>
</dbReference>
<organism>
    <name type="scientific">Onion yellows phytoplasma (strain OY-M)</name>
    <dbReference type="NCBI Taxonomy" id="262768"/>
    <lineage>
        <taxon>Bacteria</taxon>
        <taxon>Bacillati</taxon>
        <taxon>Mycoplasmatota</taxon>
        <taxon>Mollicutes</taxon>
        <taxon>Acholeplasmatales</taxon>
        <taxon>Acholeplasmataceae</taxon>
        <taxon>Candidatus Phytoplasma</taxon>
        <taxon>16SrI (Aster yellows group)</taxon>
    </lineage>
</organism>
<gene>
    <name evidence="1" type="primary">rsmH</name>
    <name type="synonym">mraW</name>
    <name type="ordered locus">PAM_735</name>
</gene>
<proteinExistence type="inferred from homology"/>
<reference key="1">
    <citation type="journal article" date="2004" name="Nat. Genet.">
        <title>Reductive evolution suggested from the complete genome sequence of a plant-pathogenic phytoplasma.</title>
        <authorList>
            <person name="Oshima K."/>
            <person name="Kakizawa S."/>
            <person name="Nishigawa H."/>
            <person name="Jung H.-Y."/>
            <person name="Wei W."/>
            <person name="Suzuki S."/>
            <person name="Arashida R."/>
            <person name="Nakata D."/>
            <person name="Miyata S."/>
            <person name="Ugaki M."/>
            <person name="Namba S."/>
        </authorList>
    </citation>
    <scope>NUCLEOTIDE SEQUENCE [LARGE SCALE GENOMIC DNA]</scope>
    <source>
        <strain>OY-M</strain>
    </source>
</reference>
<keyword id="KW-0963">Cytoplasm</keyword>
<keyword id="KW-0489">Methyltransferase</keyword>
<keyword id="KW-0698">rRNA processing</keyword>
<keyword id="KW-0949">S-adenosyl-L-methionine</keyword>
<keyword id="KW-0808">Transferase</keyword>
<evidence type="ECO:0000255" key="1">
    <source>
        <dbReference type="HAMAP-Rule" id="MF_01007"/>
    </source>
</evidence>
<evidence type="ECO:0000305" key="2"/>
<name>RSMH_ONYPE</name>
<comment type="function">
    <text evidence="1">Specifically methylates the N4 position of cytidine in position 1402 (C1402) of 16S rRNA.</text>
</comment>
<comment type="catalytic activity">
    <reaction evidence="1">
        <text>cytidine(1402) in 16S rRNA + S-adenosyl-L-methionine = N(4)-methylcytidine(1402) in 16S rRNA + S-adenosyl-L-homocysteine + H(+)</text>
        <dbReference type="Rhea" id="RHEA:42928"/>
        <dbReference type="Rhea" id="RHEA-COMP:10286"/>
        <dbReference type="Rhea" id="RHEA-COMP:10287"/>
        <dbReference type="ChEBI" id="CHEBI:15378"/>
        <dbReference type="ChEBI" id="CHEBI:57856"/>
        <dbReference type="ChEBI" id="CHEBI:59789"/>
        <dbReference type="ChEBI" id="CHEBI:74506"/>
        <dbReference type="ChEBI" id="CHEBI:82748"/>
        <dbReference type="EC" id="2.1.1.199"/>
    </reaction>
</comment>
<comment type="subcellular location">
    <subcellularLocation>
        <location evidence="1">Cytoplasm</location>
    </subcellularLocation>
</comment>
<comment type="similarity">
    <text evidence="1">Belongs to the methyltransferase superfamily. RsmH family.</text>
</comment>
<comment type="sequence caution" evidence="2">
    <conflict type="erroneous initiation">
        <sequence resource="EMBL-CDS" id="BAD04820"/>
    </conflict>
</comment>